<keyword id="KW-0560">Oxidoreductase</keyword>
<keyword id="KW-1185">Reference proteome</keyword>
<dbReference type="EC" id="1.4.4.2" evidence="1"/>
<dbReference type="EMBL" id="CP000575">
    <property type="protein sequence ID" value="ABN70209.1"/>
    <property type="molecule type" value="Genomic_DNA"/>
</dbReference>
<dbReference type="RefSeq" id="WP_011839400.1">
    <property type="nucleotide sequence ID" value="NC_009033.1"/>
</dbReference>
<dbReference type="SMR" id="A3DNJ9"/>
<dbReference type="STRING" id="399550.Smar_1113"/>
<dbReference type="GeneID" id="4907540"/>
<dbReference type="KEGG" id="smr:Smar_1113"/>
<dbReference type="eggNOG" id="arCOG00077">
    <property type="taxonomic scope" value="Archaea"/>
</dbReference>
<dbReference type="HOGENOM" id="CLU_004620_0_2_2"/>
<dbReference type="OrthoDB" id="17655at2157"/>
<dbReference type="Proteomes" id="UP000000254">
    <property type="component" value="Chromosome"/>
</dbReference>
<dbReference type="GO" id="GO:0004375">
    <property type="term" value="F:glycine dehydrogenase (decarboxylating) activity"/>
    <property type="evidence" value="ECO:0007669"/>
    <property type="project" value="UniProtKB-EC"/>
</dbReference>
<dbReference type="GO" id="GO:0019464">
    <property type="term" value="P:glycine decarboxylation via glycine cleavage system"/>
    <property type="evidence" value="ECO:0007669"/>
    <property type="project" value="UniProtKB-UniRule"/>
</dbReference>
<dbReference type="GO" id="GO:0009116">
    <property type="term" value="P:nucleoside metabolic process"/>
    <property type="evidence" value="ECO:0007669"/>
    <property type="project" value="InterPro"/>
</dbReference>
<dbReference type="CDD" id="cd00613">
    <property type="entry name" value="GDC-P"/>
    <property type="match status" value="1"/>
</dbReference>
<dbReference type="Gene3D" id="3.90.1150.10">
    <property type="entry name" value="Aspartate Aminotransferase, domain 1"/>
    <property type="match status" value="1"/>
</dbReference>
<dbReference type="Gene3D" id="3.40.640.10">
    <property type="entry name" value="Type I PLP-dependent aspartate aminotransferase-like (Major domain)"/>
    <property type="match status" value="1"/>
</dbReference>
<dbReference type="HAMAP" id="MF_00712">
    <property type="entry name" value="GcvPA"/>
    <property type="match status" value="1"/>
</dbReference>
<dbReference type="InterPro" id="IPR023010">
    <property type="entry name" value="GcvPA"/>
</dbReference>
<dbReference type="InterPro" id="IPR049315">
    <property type="entry name" value="GDC-P_N"/>
</dbReference>
<dbReference type="InterPro" id="IPR020581">
    <property type="entry name" value="GDC_P"/>
</dbReference>
<dbReference type="InterPro" id="IPR015424">
    <property type="entry name" value="PyrdxlP-dep_Trfase"/>
</dbReference>
<dbReference type="InterPro" id="IPR015421">
    <property type="entry name" value="PyrdxlP-dep_Trfase_major"/>
</dbReference>
<dbReference type="InterPro" id="IPR015422">
    <property type="entry name" value="PyrdxlP-dep_Trfase_small"/>
</dbReference>
<dbReference type="NCBIfam" id="NF001696">
    <property type="entry name" value="PRK00451.1"/>
    <property type="match status" value="1"/>
</dbReference>
<dbReference type="PANTHER" id="PTHR42806">
    <property type="entry name" value="GLYCINE CLEAVAGE SYSTEM P-PROTEIN"/>
    <property type="match status" value="1"/>
</dbReference>
<dbReference type="PANTHER" id="PTHR42806:SF1">
    <property type="entry name" value="GLYCINE DEHYDROGENASE (DECARBOXYLATING)"/>
    <property type="match status" value="1"/>
</dbReference>
<dbReference type="Pfam" id="PF02347">
    <property type="entry name" value="GDC-P"/>
    <property type="match status" value="1"/>
</dbReference>
<dbReference type="PIRSF" id="PIRSF006815">
    <property type="entry name" value="GcvPA"/>
    <property type="match status" value="1"/>
</dbReference>
<dbReference type="SUPFAM" id="SSF53383">
    <property type="entry name" value="PLP-dependent transferases"/>
    <property type="match status" value="1"/>
</dbReference>
<protein>
    <recommendedName>
        <fullName evidence="1">Probable glycine dehydrogenase (decarboxylating) subunit 1</fullName>
        <ecNumber evidence="1">1.4.4.2</ecNumber>
    </recommendedName>
    <alternativeName>
        <fullName evidence="1">Glycine cleavage system P-protein subunit 1</fullName>
    </alternativeName>
    <alternativeName>
        <fullName evidence="1">Glycine decarboxylase subunit 1</fullName>
    </alternativeName>
    <alternativeName>
        <fullName evidence="1">Glycine dehydrogenase (aminomethyl-transferring) subunit 1</fullName>
    </alternativeName>
</protein>
<proteinExistence type="inferred from homology"/>
<gene>
    <name evidence="1" type="primary">gcvPA</name>
    <name type="ordered locus">Smar_1113</name>
</gene>
<feature type="chain" id="PRO_1000045682" description="Probable glycine dehydrogenase (decarboxylating) subunit 1">
    <location>
        <begin position="1"/>
        <end position="469"/>
    </location>
</feature>
<name>GCSPA_STAMF</name>
<organism>
    <name type="scientific">Staphylothermus marinus (strain ATCC 43588 / DSM 3639 / JCM 9404 / F1)</name>
    <dbReference type="NCBI Taxonomy" id="399550"/>
    <lineage>
        <taxon>Archaea</taxon>
        <taxon>Thermoproteota</taxon>
        <taxon>Thermoprotei</taxon>
        <taxon>Desulfurococcales</taxon>
        <taxon>Desulfurococcaceae</taxon>
        <taxon>Staphylothermus</taxon>
    </lineage>
</organism>
<evidence type="ECO:0000255" key="1">
    <source>
        <dbReference type="HAMAP-Rule" id="MF_00712"/>
    </source>
</evidence>
<reference key="1">
    <citation type="journal article" date="2009" name="BMC Genomics">
        <title>The complete genome sequence of Staphylothermus marinus reveals differences in sulfur metabolism among heterotrophic Crenarchaeota.</title>
        <authorList>
            <person name="Anderson I.J."/>
            <person name="Dharmarajan L."/>
            <person name="Rodriguez J."/>
            <person name="Hooper S."/>
            <person name="Porat I."/>
            <person name="Ulrich L.E."/>
            <person name="Elkins J.G."/>
            <person name="Mavromatis K."/>
            <person name="Sun H."/>
            <person name="Land M."/>
            <person name="Lapidus A."/>
            <person name="Lucas S."/>
            <person name="Barry K."/>
            <person name="Huber H."/>
            <person name="Zhulin I.B."/>
            <person name="Whitman W.B."/>
            <person name="Mukhopadhyay B."/>
            <person name="Woese C."/>
            <person name="Bristow J."/>
            <person name="Kyrpides N."/>
        </authorList>
    </citation>
    <scope>NUCLEOTIDE SEQUENCE [LARGE SCALE GENOMIC DNA]</scope>
    <source>
        <strain>ATCC 43588 / DSM 3639 / JCM 9404 / F1</strain>
    </source>
</reference>
<reference key="2">
    <citation type="journal article" date="2009" name="Stand. Genomic Sci.">
        <title>Complete genome sequence of Staphylothermus marinus Stetter and Fiala 1986 type strain F1.</title>
        <authorList>
            <person name="Anderson I.J."/>
            <person name="Sun H."/>
            <person name="Lapidus A."/>
            <person name="Copeland A."/>
            <person name="Glavina Del Rio T."/>
            <person name="Tice H."/>
            <person name="Dalin E."/>
            <person name="Lucas S."/>
            <person name="Barry K."/>
            <person name="Land M."/>
            <person name="Richardson P."/>
            <person name="Huber H."/>
            <person name="Kyrpides N.C."/>
        </authorList>
    </citation>
    <scope>NUCLEOTIDE SEQUENCE [LARGE SCALE GENOMIC DNA]</scope>
    <source>
        <strain>ATCC 43588 / DSM 3639 / JCM 9404 / F1</strain>
    </source>
</reference>
<sequence length="469" mass="53318">MDSHPWIPNSTREIREKMLEKIGVKNIDEFFNDIPRNIRISKEEWDNLEIGLKKPISEITARRIIEEKLSMNKVFVPLLFLGGGAYPHYVPSVIKYLISRGEFLTSYTPYQPEISQGILQALFEYQSLMAELLDMDVVNSSMYDWASALAEALLMSLRVKKNKKKILLPSNMNPIHKRVVNTYLSPHNVRIEYVNYNHDTGLIDLEDLKNKIDNDTAAVYVQSPNFFGYIEENAKEIGEIVHDIDSLFIMGIDPISLGLIKPPGELGADIAVGEGQPLGLGLNYGGPYLGIFATRMDMKLVRQMPGRIIGLTRSVDGSRAFTMILQTREQHIRRAKATSNICTNEALSAIAAAIYLALLGKSGIRKLAELIYYRSHYAQARLREIGLNTDIFKSDFFKEFPINFDNIGVKYRYVHEKLLENNIHGGLYIGNWFPELGETALYAFTEIHTKNDIDLLVEKLADIINELKR</sequence>
<accession>A3DNJ9</accession>
<comment type="function">
    <text evidence="1">The glycine cleavage system catalyzes the degradation of glycine. The P protein binds the alpha-amino group of glycine through its pyridoxal phosphate cofactor; CO(2) is released and the remaining methylamine moiety is then transferred to the lipoamide cofactor of the H protein.</text>
</comment>
<comment type="catalytic activity">
    <reaction evidence="1">
        <text>N(6)-[(R)-lipoyl]-L-lysyl-[glycine-cleavage complex H protein] + glycine + H(+) = N(6)-[(R)-S(8)-aminomethyldihydrolipoyl]-L-lysyl-[glycine-cleavage complex H protein] + CO2</text>
        <dbReference type="Rhea" id="RHEA:24304"/>
        <dbReference type="Rhea" id="RHEA-COMP:10494"/>
        <dbReference type="Rhea" id="RHEA-COMP:10495"/>
        <dbReference type="ChEBI" id="CHEBI:15378"/>
        <dbReference type="ChEBI" id="CHEBI:16526"/>
        <dbReference type="ChEBI" id="CHEBI:57305"/>
        <dbReference type="ChEBI" id="CHEBI:83099"/>
        <dbReference type="ChEBI" id="CHEBI:83143"/>
        <dbReference type="EC" id="1.4.4.2"/>
    </reaction>
</comment>
<comment type="subunit">
    <text evidence="1">The glycine cleavage system is composed of four proteins: P, T, L and H. In this organism, the P 'protein' is a heterodimer of two subunits.</text>
</comment>
<comment type="similarity">
    <text evidence="1">Belongs to the GcvP family. N-terminal subunit subfamily.</text>
</comment>